<name>LDH_LACLN</name>
<keyword id="KW-0021">Allosteric enzyme</keyword>
<keyword id="KW-0963">Cytoplasm</keyword>
<keyword id="KW-0520">NAD</keyword>
<keyword id="KW-0560">Oxidoreductase</keyword>
<keyword id="KW-0597">Phosphoprotein</keyword>
<reference key="1">
    <citation type="journal article" date="2003" name="J. Bacteriol.">
        <title>IS981-mediated adaptive evolution recovers lactate production by ldhB transcription activation in a lactate dehydrogenase-deficient strain of Lactococcus lactis.</title>
        <authorList>
            <person name="Bongers R.S."/>
            <person name="Hoefnagel M.H.N."/>
            <person name="Starrenburg M.J.C."/>
            <person name="Siemerink M.A.J."/>
            <person name="Arends J.G.A."/>
            <person name="Hugenholtz J."/>
            <person name="Kleerebezem M."/>
        </authorList>
    </citation>
    <scope>NUCLEOTIDE SEQUENCE [GENOMIC DNA]</scope>
    <scope>CATALYTIC ACTIVITY</scope>
    <source>
        <strain>NZ9000</strain>
    </source>
</reference>
<reference key="2">
    <citation type="journal article" date="2010" name="J. Bacteriol.">
        <title>Genome sequences of Lactococcus lactis MG1363 (revised) and NZ9000 and comparative physiological studies.</title>
        <authorList>
            <person name="Linares D.M."/>
            <person name="Kok J."/>
            <person name="Poolman B."/>
        </authorList>
    </citation>
    <scope>NUCLEOTIDE SEQUENCE [LARGE SCALE GENOMIC DNA]</scope>
    <source>
        <strain>NZ9000</strain>
    </source>
</reference>
<evidence type="ECO:0000255" key="1">
    <source>
        <dbReference type="HAMAP-Rule" id="MF_00488"/>
    </source>
</evidence>
<evidence type="ECO:0000269" key="2">
    <source>
    </source>
</evidence>
<evidence type="ECO:0000303" key="3">
    <source>
    </source>
</evidence>
<dbReference type="EC" id="1.1.1.27" evidence="1"/>
<dbReference type="EMBL" id="AY230155">
    <property type="protein sequence ID" value="AAO60056.1"/>
    <property type="molecule type" value="Genomic_DNA"/>
</dbReference>
<dbReference type="EMBL" id="CP002094">
    <property type="protein sequence ID" value="ADJ59411.1"/>
    <property type="molecule type" value="Genomic_DNA"/>
</dbReference>
<dbReference type="RefSeq" id="WP_011834445.1">
    <property type="nucleotide sequence ID" value="NC_017949.1"/>
</dbReference>
<dbReference type="SMR" id="D8KFT1"/>
<dbReference type="KEGG" id="lln:LLNZ_02045"/>
<dbReference type="PATRIC" id="fig|746361.3.peg.404"/>
<dbReference type="HOGENOM" id="CLU_045401_1_1_9"/>
<dbReference type="SABIO-RK" id="D8KFT1"/>
<dbReference type="UniPathway" id="UPA00554">
    <property type="reaction ID" value="UER00611"/>
</dbReference>
<dbReference type="GO" id="GO:0005737">
    <property type="term" value="C:cytoplasm"/>
    <property type="evidence" value="ECO:0007669"/>
    <property type="project" value="UniProtKB-SubCell"/>
</dbReference>
<dbReference type="GO" id="GO:0004459">
    <property type="term" value="F:L-lactate dehydrogenase activity"/>
    <property type="evidence" value="ECO:0007669"/>
    <property type="project" value="UniProtKB-UniRule"/>
</dbReference>
<dbReference type="GO" id="GO:0006096">
    <property type="term" value="P:glycolytic process"/>
    <property type="evidence" value="ECO:0007669"/>
    <property type="project" value="UniProtKB-UniRule"/>
</dbReference>
<dbReference type="GO" id="GO:0006089">
    <property type="term" value="P:lactate metabolic process"/>
    <property type="evidence" value="ECO:0007669"/>
    <property type="project" value="TreeGrafter"/>
</dbReference>
<dbReference type="CDD" id="cd05291">
    <property type="entry name" value="HicDH_like"/>
    <property type="match status" value="1"/>
</dbReference>
<dbReference type="FunFam" id="3.40.50.720:FF:000018">
    <property type="entry name" value="Malate dehydrogenase"/>
    <property type="match status" value="1"/>
</dbReference>
<dbReference type="Gene3D" id="3.90.110.10">
    <property type="entry name" value="Lactate dehydrogenase/glycoside hydrolase, family 4, C-terminal"/>
    <property type="match status" value="1"/>
</dbReference>
<dbReference type="Gene3D" id="3.40.50.720">
    <property type="entry name" value="NAD(P)-binding Rossmann-like Domain"/>
    <property type="match status" value="1"/>
</dbReference>
<dbReference type="HAMAP" id="MF_00488">
    <property type="entry name" value="Lactate_dehydrog"/>
    <property type="match status" value="1"/>
</dbReference>
<dbReference type="InterPro" id="IPR001557">
    <property type="entry name" value="L-lactate/malate_DH"/>
</dbReference>
<dbReference type="InterPro" id="IPR011304">
    <property type="entry name" value="L-lactate_DH"/>
</dbReference>
<dbReference type="InterPro" id="IPR018177">
    <property type="entry name" value="L-lactate_DH_AS"/>
</dbReference>
<dbReference type="InterPro" id="IPR022383">
    <property type="entry name" value="Lactate/malate_DH_C"/>
</dbReference>
<dbReference type="InterPro" id="IPR001236">
    <property type="entry name" value="Lactate/malate_DH_N"/>
</dbReference>
<dbReference type="InterPro" id="IPR015955">
    <property type="entry name" value="Lactate_DH/Glyco_Ohase_4_C"/>
</dbReference>
<dbReference type="InterPro" id="IPR036291">
    <property type="entry name" value="NAD(P)-bd_dom_sf"/>
</dbReference>
<dbReference type="NCBIfam" id="TIGR01771">
    <property type="entry name" value="L-LDH-NAD"/>
    <property type="match status" value="1"/>
</dbReference>
<dbReference type="NCBIfam" id="NF000824">
    <property type="entry name" value="PRK00066.1"/>
    <property type="match status" value="1"/>
</dbReference>
<dbReference type="NCBIfam" id="NF004863">
    <property type="entry name" value="PRK06223.1"/>
    <property type="match status" value="1"/>
</dbReference>
<dbReference type="PANTHER" id="PTHR43128">
    <property type="entry name" value="L-2-HYDROXYCARBOXYLATE DEHYDROGENASE (NAD(P)(+))"/>
    <property type="match status" value="1"/>
</dbReference>
<dbReference type="PANTHER" id="PTHR43128:SF16">
    <property type="entry name" value="L-LACTATE DEHYDROGENASE"/>
    <property type="match status" value="1"/>
</dbReference>
<dbReference type="Pfam" id="PF02866">
    <property type="entry name" value="Ldh_1_C"/>
    <property type="match status" value="1"/>
</dbReference>
<dbReference type="Pfam" id="PF00056">
    <property type="entry name" value="Ldh_1_N"/>
    <property type="match status" value="1"/>
</dbReference>
<dbReference type="PIRSF" id="PIRSF000102">
    <property type="entry name" value="Lac_mal_DH"/>
    <property type="match status" value="1"/>
</dbReference>
<dbReference type="PRINTS" id="PR00086">
    <property type="entry name" value="LLDHDRGNASE"/>
</dbReference>
<dbReference type="SUPFAM" id="SSF56327">
    <property type="entry name" value="LDH C-terminal domain-like"/>
    <property type="match status" value="1"/>
</dbReference>
<dbReference type="SUPFAM" id="SSF51735">
    <property type="entry name" value="NAD(P)-binding Rossmann-fold domains"/>
    <property type="match status" value="1"/>
</dbReference>
<dbReference type="PROSITE" id="PS00064">
    <property type="entry name" value="L_LDH"/>
    <property type="match status" value="1"/>
</dbReference>
<comment type="function">
    <text evidence="1">Catalyzes the conversion of lactate to pyruvate.</text>
</comment>
<comment type="catalytic activity">
    <reaction evidence="1 2">
        <text>(S)-lactate + NAD(+) = pyruvate + NADH + H(+)</text>
        <dbReference type="Rhea" id="RHEA:23444"/>
        <dbReference type="ChEBI" id="CHEBI:15361"/>
        <dbReference type="ChEBI" id="CHEBI:15378"/>
        <dbReference type="ChEBI" id="CHEBI:16651"/>
        <dbReference type="ChEBI" id="CHEBI:57540"/>
        <dbReference type="ChEBI" id="CHEBI:57945"/>
        <dbReference type="EC" id="1.1.1.27"/>
    </reaction>
</comment>
<comment type="activity regulation">
    <text evidence="1">Allosterically activated by fructose 1,6-bisphosphate (FBP).</text>
</comment>
<comment type="pathway">
    <text evidence="1">Fermentation; pyruvate fermentation to lactate; (S)-lactate from pyruvate: step 1/1.</text>
</comment>
<comment type="subunit">
    <text evidence="1">Homotetramer.</text>
</comment>
<comment type="subcellular location">
    <subcellularLocation>
        <location evidence="1">Cytoplasm</location>
    </subcellularLocation>
</comment>
<comment type="similarity">
    <text evidence="1">Belongs to the LDH/MDH superfamily. LDH family.</text>
</comment>
<feature type="chain" id="PRO_0000402184" description="L-lactate dehydrogenase">
    <location>
        <begin position="1"/>
        <end position="314"/>
    </location>
</feature>
<feature type="active site" description="Proton acceptor" evidence="1">
    <location>
        <position position="178"/>
    </location>
</feature>
<feature type="binding site" evidence="1">
    <location>
        <position position="16"/>
    </location>
    <ligand>
        <name>NAD(+)</name>
        <dbReference type="ChEBI" id="CHEBI:57540"/>
    </ligand>
</feature>
<feature type="binding site" evidence="1">
    <location>
        <position position="37"/>
    </location>
    <ligand>
        <name>NAD(+)</name>
        <dbReference type="ChEBI" id="CHEBI:57540"/>
    </ligand>
</feature>
<feature type="binding site" evidence="1">
    <location>
        <position position="42"/>
    </location>
    <ligand>
        <name>NAD(+)</name>
        <dbReference type="ChEBI" id="CHEBI:57540"/>
    </ligand>
</feature>
<feature type="binding site" evidence="1">
    <location>
        <position position="68"/>
    </location>
    <ligand>
        <name>NAD(+)</name>
        <dbReference type="ChEBI" id="CHEBI:57540"/>
    </ligand>
</feature>
<feature type="binding site" evidence="1">
    <location>
        <begin position="82"/>
        <end position="83"/>
    </location>
    <ligand>
        <name>NAD(+)</name>
        <dbReference type="ChEBI" id="CHEBI:57540"/>
    </ligand>
</feature>
<feature type="binding site" evidence="1">
    <location>
        <position position="85"/>
    </location>
    <ligand>
        <name>substrate</name>
    </ligand>
</feature>
<feature type="binding site" evidence="1">
    <location>
        <position position="91"/>
    </location>
    <ligand>
        <name>substrate</name>
    </ligand>
</feature>
<feature type="binding site" evidence="1">
    <location>
        <position position="104"/>
    </location>
    <ligand>
        <name>NAD(+)</name>
        <dbReference type="ChEBI" id="CHEBI:57540"/>
    </ligand>
</feature>
<feature type="binding site" evidence="1">
    <location>
        <begin position="121"/>
        <end position="123"/>
    </location>
    <ligand>
        <name>NAD(+)</name>
        <dbReference type="ChEBI" id="CHEBI:57540"/>
    </ligand>
</feature>
<feature type="binding site" evidence="1">
    <location>
        <begin position="123"/>
        <end position="126"/>
    </location>
    <ligand>
        <name>substrate</name>
    </ligand>
</feature>
<feature type="binding site" evidence="1">
    <location>
        <position position="146"/>
    </location>
    <ligand>
        <name>NAD(+)</name>
        <dbReference type="ChEBI" id="CHEBI:57540"/>
    </ligand>
</feature>
<feature type="binding site" evidence="1">
    <location>
        <begin position="151"/>
        <end position="154"/>
    </location>
    <ligand>
        <name>substrate</name>
    </ligand>
</feature>
<feature type="binding site" evidence="1">
    <location>
        <position position="156"/>
    </location>
    <ligand>
        <name>beta-D-fructose 1,6-bisphosphate</name>
        <dbReference type="ChEBI" id="CHEBI:32966"/>
        <note>allosteric activator</note>
    </ligand>
</feature>
<feature type="binding site" evidence="1">
    <location>
        <position position="171"/>
    </location>
    <ligand>
        <name>beta-D-fructose 1,6-bisphosphate</name>
        <dbReference type="ChEBI" id="CHEBI:32966"/>
        <note>allosteric activator</note>
    </ligand>
</feature>
<feature type="binding site" evidence="1">
    <location>
        <position position="232"/>
    </location>
    <ligand>
        <name>substrate</name>
    </ligand>
</feature>
<feature type="modified residue" description="Phosphotyrosine" evidence="1">
    <location>
        <position position="223"/>
    </location>
</feature>
<sequence length="314" mass="34398">MKITSRKVVVIGTGFVGTSIAYSMINQGLVNELVLIDVNQDKAEGEALDLLDGISWAQENVIVRAGNYKDCENADIVVITAGVNQKPGQSRLDLVNTNAKIMRSIVTQVMDSGFDGIFVIASNPVDILTYVAWETSGLDQSRIVGTGTTLDTTRFRKELATKLEIDPRSVHGYIIGEHGDSEVAVWSHTTIGGKPILEFIVKNKKIGLEDLSNLSNKVKNAAYEIIDKKQATYYGIGMSTARIVKAILNNEQVILPVSAYLRGEYGQEGVFTGVPSVVNQNGVREIIELNIDAYEMKQFEKSVSQLKEVIESIK</sequence>
<gene>
    <name evidence="1" type="primary">ldh</name>
    <name evidence="3" type="synonym">ldhB</name>
    <name type="ordered locus">LLNZ_02045</name>
</gene>
<proteinExistence type="evidence at protein level"/>
<accession>D8KFT1</accession>
<accession>A2RIA3</accession>
<accession>Q7WYP6</accession>
<protein>
    <recommendedName>
        <fullName evidence="1">L-lactate dehydrogenase</fullName>
        <shortName evidence="1">L-LDH</shortName>
        <ecNumber evidence="1">1.1.1.27</ecNumber>
    </recommendedName>
</protein>
<organism>
    <name type="scientific">Lactococcus lactis subsp. cremoris (strain NZ9000)</name>
    <dbReference type="NCBI Taxonomy" id="746361"/>
    <lineage>
        <taxon>Bacteria</taxon>
        <taxon>Bacillati</taxon>
        <taxon>Bacillota</taxon>
        <taxon>Bacilli</taxon>
        <taxon>Lactobacillales</taxon>
        <taxon>Streptococcaceae</taxon>
        <taxon>Lactococcus</taxon>
        <taxon>Lactococcus cremoris subsp. cremoris</taxon>
    </lineage>
</organism>